<reference key="1">
    <citation type="journal article" date="2004" name="Nature">
        <title>Genome sequence of Silicibacter pomeroyi reveals adaptations to the marine environment.</title>
        <authorList>
            <person name="Moran M.A."/>
            <person name="Buchan A."/>
            <person name="Gonzalez J.M."/>
            <person name="Heidelberg J.F."/>
            <person name="Whitman W.B."/>
            <person name="Kiene R.P."/>
            <person name="Henriksen J.R."/>
            <person name="King G.M."/>
            <person name="Belas R."/>
            <person name="Fuqua C."/>
            <person name="Brinkac L.M."/>
            <person name="Lewis M."/>
            <person name="Johri S."/>
            <person name="Weaver B."/>
            <person name="Pai G."/>
            <person name="Eisen J.A."/>
            <person name="Rahe E."/>
            <person name="Sheldon W.M."/>
            <person name="Ye W."/>
            <person name="Miller T.R."/>
            <person name="Carlton J."/>
            <person name="Rasko D.A."/>
            <person name="Paulsen I.T."/>
            <person name="Ren Q."/>
            <person name="Daugherty S.C."/>
            <person name="DeBoy R.T."/>
            <person name="Dodson R.J."/>
            <person name="Durkin A.S."/>
            <person name="Madupu R."/>
            <person name="Nelson W.C."/>
            <person name="Sullivan S.A."/>
            <person name="Rosovitz M.J."/>
            <person name="Haft D.H."/>
            <person name="Selengut J."/>
            <person name="Ward N."/>
        </authorList>
    </citation>
    <scope>NUCLEOTIDE SEQUENCE [LARGE SCALE GENOMIC DNA]</scope>
    <source>
        <strain>ATCC 700808 / DSM 15171 / DSS-3</strain>
    </source>
</reference>
<reference key="2">
    <citation type="journal article" date="2014" name="Stand. Genomic Sci.">
        <title>An updated genome annotation for the model marine bacterium Ruegeria pomeroyi DSS-3.</title>
        <authorList>
            <person name="Rivers A.R."/>
            <person name="Smith C.B."/>
            <person name="Moran M.A."/>
        </authorList>
    </citation>
    <scope>GENOME REANNOTATION</scope>
    <source>
        <strain>ATCC 700808 / DSM 15171 / DSS-3</strain>
    </source>
</reference>
<sequence>MTLIRLLACLLFLPCLAQAGAVRLKDLVEFDGVRGNDLVGYGLVVGLNGTGDGLRNAPFTEEIMSNILERLGVNVTGEDFRPKNVAAVFVTAALPPFARVGSQIDITVSAIGDSKSLLGGTLIMTPLNAADGQIYAVAQGTVLAGGASAEGQAASVVQGVPTSGVIPAGARVEREIEFDLGSLTQLRLALREPDFTTAGRIETAVNSAFNGRVAVMRDSGTVELDIAATQARSPAHVIGRIENILVEPERKARVVVDQRSGTIVMGADVRISRVAVSQGSLTLRVEEAPIAVQPNPFADGDTVVVPRTNAEIEQEPGIKLAEVPESASLSDVVAGLNALGVSPRDMIDILKTIKAAGALHAEFVVR</sequence>
<keyword id="KW-0975">Bacterial flagellum</keyword>
<keyword id="KW-0574">Periplasm</keyword>
<keyword id="KW-1185">Reference proteome</keyword>
<keyword id="KW-0732">Signal</keyword>
<organism>
    <name type="scientific">Ruegeria pomeroyi (strain ATCC 700808 / DSM 15171 / DSS-3)</name>
    <name type="common">Silicibacter pomeroyi</name>
    <dbReference type="NCBI Taxonomy" id="246200"/>
    <lineage>
        <taxon>Bacteria</taxon>
        <taxon>Pseudomonadati</taxon>
        <taxon>Pseudomonadota</taxon>
        <taxon>Alphaproteobacteria</taxon>
        <taxon>Rhodobacterales</taxon>
        <taxon>Roseobacteraceae</taxon>
        <taxon>Ruegeria</taxon>
    </lineage>
</organism>
<feature type="signal peptide" evidence="1">
    <location>
        <begin position="1"/>
        <end position="19"/>
    </location>
</feature>
<feature type="chain" id="PRO_0000009524" description="Flagellar P-ring protein">
    <location>
        <begin position="20"/>
        <end position="366"/>
    </location>
</feature>
<comment type="function">
    <text evidence="1">Assembles around the rod to form the L-ring and probably protects the motor/basal body from shearing forces during rotation.</text>
</comment>
<comment type="subunit">
    <text evidence="1">The basal body constitutes a major portion of the flagellar organelle and consists of four rings (L,P,S, and M) mounted on a central rod.</text>
</comment>
<comment type="subcellular location">
    <subcellularLocation>
        <location evidence="1">Periplasm</location>
    </subcellularLocation>
    <subcellularLocation>
        <location evidence="1">Bacterial flagellum basal body</location>
    </subcellularLocation>
</comment>
<comment type="similarity">
    <text evidence="1">Belongs to the FlgI family.</text>
</comment>
<protein>
    <recommendedName>
        <fullName evidence="1">Flagellar P-ring protein</fullName>
    </recommendedName>
    <alternativeName>
        <fullName evidence="1">Basal body P-ring protein</fullName>
    </alternativeName>
</protein>
<evidence type="ECO:0000255" key="1">
    <source>
        <dbReference type="HAMAP-Rule" id="MF_00416"/>
    </source>
</evidence>
<dbReference type="EMBL" id="CP000031">
    <property type="protein sequence ID" value="AAV93521.1"/>
    <property type="molecule type" value="Genomic_DNA"/>
</dbReference>
<dbReference type="RefSeq" id="WP_011045964.1">
    <property type="nucleotide sequence ID" value="NC_003911.12"/>
</dbReference>
<dbReference type="SMR" id="Q5LWZ2"/>
<dbReference type="STRING" id="246200.SPO0195"/>
<dbReference type="PaxDb" id="246200-SPO0195"/>
<dbReference type="KEGG" id="sil:SPO0195"/>
<dbReference type="eggNOG" id="COG1706">
    <property type="taxonomic scope" value="Bacteria"/>
</dbReference>
<dbReference type="HOGENOM" id="CLU_045235_1_0_5"/>
<dbReference type="OrthoDB" id="9786431at2"/>
<dbReference type="Proteomes" id="UP000001023">
    <property type="component" value="Chromosome"/>
</dbReference>
<dbReference type="GO" id="GO:0009428">
    <property type="term" value="C:bacterial-type flagellum basal body, distal rod, P ring"/>
    <property type="evidence" value="ECO:0007669"/>
    <property type="project" value="InterPro"/>
</dbReference>
<dbReference type="GO" id="GO:0030288">
    <property type="term" value="C:outer membrane-bounded periplasmic space"/>
    <property type="evidence" value="ECO:0007669"/>
    <property type="project" value="InterPro"/>
</dbReference>
<dbReference type="GO" id="GO:0005198">
    <property type="term" value="F:structural molecule activity"/>
    <property type="evidence" value="ECO:0007669"/>
    <property type="project" value="InterPro"/>
</dbReference>
<dbReference type="GO" id="GO:0071973">
    <property type="term" value="P:bacterial-type flagellum-dependent cell motility"/>
    <property type="evidence" value="ECO:0007669"/>
    <property type="project" value="InterPro"/>
</dbReference>
<dbReference type="HAMAP" id="MF_00416">
    <property type="entry name" value="FlgI"/>
    <property type="match status" value="1"/>
</dbReference>
<dbReference type="InterPro" id="IPR001782">
    <property type="entry name" value="Flag_FlgI"/>
</dbReference>
<dbReference type="NCBIfam" id="NF003676">
    <property type="entry name" value="PRK05303.1"/>
    <property type="match status" value="1"/>
</dbReference>
<dbReference type="PANTHER" id="PTHR30381">
    <property type="entry name" value="FLAGELLAR P-RING PERIPLASMIC PROTEIN FLGI"/>
    <property type="match status" value="1"/>
</dbReference>
<dbReference type="PANTHER" id="PTHR30381:SF0">
    <property type="entry name" value="FLAGELLAR P-RING PROTEIN"/>
    <property type="match status" value="1"/>
</dbReference>
<dbReference type="Pfam" id="PF02119">
    <property type="entry name" value="FlgI"/>
    <property type="match status" value="1"/>
</dbReference>
<dbReference type="PRINTS" id="PR01010">
    <property type="entry name" value="FLGPRINGFLGI"/>
</dbReference>
<accession>Q5LWZ2</accession>
<gene>
    <name evidence="1" type="primary">flgI</name>
    <name type="ordered locus">SPO0195</name>
</gene>
<proteinExistence type="inferred from homology"/>
<name>FLGI_RUEPO</name>